<comment type="function">
    <text evidence="1">Component of the type VII secretion system (Ess). Required for the secretion of EsxA and EsxB.</text>
</comment>
<comment type="subcellular location">
    <subcellularLocation>
        <location evidence="2">Cell membrane</location>
        <topology evidence="3">Single-pass membrane protein</topology>
    </subcellularLocation>
</comment>
<comment type="similarity">
    <text evidence="5">Belongs to the EssB family.</text>
</comment>
<keyword id="KW-1003">Cell membrane</keyword>
<keyword id="KW-0175">Coiled coil</keyword>
<keyword id="KW-0472">Membrane</keyword>
<keyword id="KW-0812">Transmembrane</keyword>
<keyword id="KW-1133">Transmembrane helix</keyword>
<keyword id="KW-0843">Virulence</keyword>
<dbReference type="EMBL" id="CP000046">
    <property type="protein sequence ID" value="AAW38829.1"/>
    <property type="molecule type" value="Genomic_DNA"/>
</dbReference>
<dbReference type="RefSeq" id="WP_000240338.1">
    <property type="nucleotide sequence ID" value="NZ_JBGOFO010000001.1"/>
</dbReference>
<dbReference type="SMR" id="Q5HJ87"/>
<dbReference type="KEGG" id="sac:SACOL0275"/>
<dbReference type="HOGENOM" id="CLU_049737_0_0_9"/>
<dbReference type="Proteomes" id="UP000000530">
    <property type="component" value="Chromosome"/>
</dbReference>
<dbReference type="GO" id="GO:0005886">
    <property type="term" value="C:plasma membrane"/>
    <property type="evidence" value="ECO:0007669"/>
    <property type="project" value="UniProtKB-SubCell"/>
</dbReference>
<dbReference type="Gene3D" id="1.10.510.10">
    <property type="entry name" value="Transferase(Phosphotransferase) domain 1"/>
    <property type="match status" value="1"/>
</dbReference>
<dbReference type="Gene3D" id="1.25.40.680">
    <property type="entry name" value="Type VII secretion system EssB, C-terminal-like domain"/>
    <property type="match status" value="1"/>
</dbReference>
<dbReference type="InterPro" id="IPR018778">
    <property type="entry name" value="T7SS_EssB"/>
</dbReference>
<dbReference type="InterPro" id="IPR042565">
    <property type="entry name" value="T7SS_EssB_C"/>
</dbReference>
<dbReference type="NCBIfam" id="TIGR03926">
    <property type="entry name" value="T7_EssB"/>
    <property type="match status" value="1"/>
</dbReference>
<dbReference type="Pfam" id="PF10140">
    <property type="entry name" value="YukC"/>
    <property type="match status" value="1"/>
</dbReference>
<name>ESSB_STAAC</name>
<feature type="chain" id="PRO_0000087062" description="Type VII secretion system protein EssB">
    <location>
        <begin position="1"/>
        <end position="444"/>
    </location>
</feature>
<feature type="topological domain" description="Cytoplasmic" evidence="2">
    <location>
        <begin position="1"/>
        <end position="229"/>
    </location>
</feature>
<feature type="transmembrane region" description="Helical" evidence="3">
    <location>
        <begin position="230"/>
        <end position="250"/>
    </location>
</feature>
<feature type="topological domain" description="Extracellular" evidence="2">
    <location>
        <begin position="251"/>
        <end position="444"/>
    </location>
</feature>
<feature type="region of interest" description="Disordered" evidence="4">
    <location>
        <begin position="366"/>
        <end position="444"/>
    </location>
</feature>
<feature type="coiled-coil region" evidence="3">
    <location>
        <begin position="387"/>
        <end position="443"/>
    </location>
</feature>
<feature type="compositionally biased region" description="Basic and acidic residues" evidence="4">
    <location>
        <begin position="372"/>
        <end position="444"/>
    </location>
</feature>
<organism>
    <name type="scientific">Staphylococcus aureus (strain COL)</name>
    <dbReference type="NCBI Taxonomy" id="93062"/>
    <lineage>
        <taxon>Bacteria</taxon>
        <taxon>Bacillati</taxon>
        <taxon>Bacillota</taxon>
        <taxon>Bacilli</taxon>
        <taxon>Bacillales</taxon>
        <taxon>Staphylococcaceae</taxon>
        <taxon>Staphylococcus</taxon>
    </lineage>
</organism>
<evidence type="ECO:0000250" key="1">
    <source>
        <dbReference type="UniProtKB" id="P0C053"/>
    </source>
</evidence>
<evidence type="ECO:0000250" key="2">
    <source>
        <dbReference type="UniProtKB" id="Q2G185"/>
    </source>
</evidence>
<evidence type="ECO:0000255" key="3"/>
<evidence type="ECO:0000256" key="4">
    <source>
        <dbReference type="SAM" id="MobiDB-lite"/>
    </source>
</evidence>
<evidence type="ECO:0000305" key="5"/>
<sequence length="444" mass="52024">MVKNHNPKNEMQDMLTPLDAEEAAKTKLRLDMREIPKSSIKPEHFHLMYLLEQHSPYFIDAELTELRDSFQIHYDINDNHTPFDNIKSFTKNEKLRYLLNIKNLEEVNRTRYTFVLAPDELFFTRDGLPIAKTRGLQNVVDPLPVSEAEFLTRYKALVICAFNEKQSFDALVEGNLELHKGTPFETKVIEAATLDLLTAFLDEQYQKQEQDYSQNYAYVRKVGHTVFKWVAIGMTTLSVLLIAFLAFLYFSVMKHNERIEKGYQAFVKDDYTQVLNTYDDLDGKKLDKEALYIYAKSYIQTNKQGLEKDKKENLLNNVTPNSNKDYLLYWMELGQGHLDEAINIATYLDDNDITKLALINKLNEIKNNGDLSNDKRSEETKKYNDKLQDILDKEKQVKDEKAKSEEEKAKAKDEKLKQQEENEKKQKEQAQKDKEKRQEAERKK</sequence>
<proteinExistence type="inferred from homology"/>
<gene>
    <name evidence="2" type="primary">essB</name>
    <name type="ordered locus">SACOL0275</name>
</gene>
<protein>
    <recommendedName>
        <fullName evidence="2">Type VII secretion system protein EssB</fullName>
    </recommendedName>
</protein>
<reference key="1">
    <citation type="journal article" date="2005" name="J. Bacteriol.">
        <title>Insights on evolution of virulence and resistance from the complete genome analysis of an early methicillin-resistant Staphylococcus aureus strain and a biofilm-producing methicillin-resistant Staphylococcus epidermidis strain.</title>
        <authorList>
            <person name="Gill S.R."/>
            <person name="Fouts D.E."/>
            <person name="Archer G.L."/>
            <person name="Mongodin E.F."/>
            <person name="DeBoy R.T."/>
            <person name="Ravel J."/>
            <person name="Paulsen I.T."/>
            <person name="Kolonay J.F."/>
            <person name="Brinkac L.M."/>
            <person name="Beanan M.J."/>
            <person name="Dodson R.J."/>
            <person name="Daugherty S.C."/>
            <person name="Madupu R."/>
            <person name="Angiuoli S.V."/>
            <person name="Durkin A.S."/>
            <person name="Haft D.H."/>
            <person name="Vamathevan J.J."/>
            <person name="Khouri H."/>
            <person name="Utterback T.R."/>
            <person name="Lee C."/>
            <person name="Dimitrov G."/>
            <person name="Jiang L."/>
            <person name="Qin H."/>
            <person name="Weidman J."/>
            <person name="Tran K."/>
            <person name="Kang K.H."/>
            <person name="Hance I.R."/>
            <person name="Nelson K.E."/>
            <person name="Fraser C.M."/>
        </authorList>
    </citation>
    <scope>NUCLEOTIDE SEQUENCE [LARGE SCALE GENOMIC DNA]</scope>
    <source>
        <strain>COL</strain>
    </source>
</reference>
<accession>Q5HJ87</accession>